<protein>
    <recommendedName>
        <fullName evidence="1">Large ribosomal subunit protein uL6</fullName>
    </recommendedName>
    <alternativeName>
        <fullName evidence="2">50S ribosomal protein L6</fullName>
    </alternativeName>
</protein>
<dbReference type="EMBL" id="CP001129">
    <property type="protein sequence ID" value="ACG61454.1"/>
    <property type="molecule type" value="Genomic_DNA"/>
</dbReference>
<dbReference type="RefSeq" id="WP_012514744.1">
    <property type="nucleotide sequence ID" value="NC_011134.1"/>
</dbReference>
<dbReference type="SMR" id="B4U515"/>
<dbReference type="GeneID" id="83703919"/>
<dbReference type="KEGG" id="sez:Sez_0071"/>
<dbReference type="HOGENOM" id="CLU_065464_1_2_9"/>
<dbReference type="Proteomes" id="UP000001873">
    <property type="component" value="Chromosome"/>
</dbReference>
<dbReference type="GO" id="GO:0022625">
    <property type="term" value="C:cytosolic large ribosomal subunit"/>
    <property type="evidence" value="ECO:0007669"/>
    <property type="project" value="TreeGrafter"/>
</dbReference>
<dbReference type="GO" id="GO:0019843">
    <property type="term" value="F:rRNA binding"/>
    <property type="evidence" value="ECO:0007669"/>
    <property type="project" value="UniProtKB-UniRule"/>
</dbReference>
<dbReference type="GO" id="GO:0003735">
    <property type="term" value="F:structural constituent of ribosome"/>
    <property type="evidence" value="ECO:0007669"/>
    <property type="project" value="InterPro"/>
</dbReference>
<dbReference type="GO" id="GO:0002181">
    <property type="term" value="P:cytoplasmic translation"/>
    <property type="evidence" value="ECO:0007669"/>
    <property type="project" value="TreeGrafter"/>
</dbReference>
<dbReference type="FunFam" id="3.90.930.12:FF:000001">
    <property type="entry name" value="50S ribosomal protein L6"/>
    <property type="match status" value="1"/>
</dbReference>
<dbReference type="FunFam" id="3.90.930.12:FF:000002">
    <property type="entry name" value="50S ribosomal protein L6"/>
    <property type="match status" value="1"/>
</dbReference>
<dbReference type="Gene3D" id="3.90.930.12">
    <property type="entry name" value="Ribosomal protein L6, alpha-beta domain"/>
    <property type="match status" value="2"/>
</dbReference>
<dbReference type="HAMAP" id="MF_01365_B">
    <property type="entry name" value="Ribosomal_uL6_B"/>
    <property type="match status" value="1"/>
</dbReference>
<dbReference type="InterPro" id="IPR000702">
    <property type="entry name" value="Ribosomal_uL6-like"/>
</dbReference>
<dbReference type="InterPro" id="IPR036789">
    <property type="entry name" value="Ribosomal_uL6-like_a/b-dom_sf"/>
</dbReference>
<dbReference type="InterPro" id="IPR020040">
    <property type="entry name" value="Ribosomal_uL6_a/b-dom"/>
</dbReference>
<dbReference type="InterPro" id="IPR019906">
    <property type="entry name" value="Ribosomal_uL6_bac-type"/>
</dbReference>
<dbReference type="InterPro" id="IPR002358">
    <property type="entry name" value="Ribosomal_uL6_CS"/>
</dbReference>
<dbReference type="NCBIfam" id="TIGR03654">
    <property type="entry name" value="L6_bact"/>
    <property type="match status" value="1"/>
</dbReference>
<dbReference type="PANTHER" id="PTHR11655">
    <property type="entry name" value="60S/50S RIBOSOMAL PROTEIN L6/L9"/>
    <property type="match status" value="1"/>
</dbReference>
<dbReference type="PANTHER" id="PTHR11655:SF14">
    <property type="entry name" value="LARGE RIBOSOMAL SUBUNIT PROTEIN UL6M"/>
    <property type="match status" value="1"/>
</dbReference>
<dbReference type="Pfam" id="PF00347">
    <property type="entry name" value="Ribosomal_L6"/>
    <property type="match status" value="2"/>
</dbReference>
<dbReference type="PIRSF" id="PIRSF002162">
    <property type="entry name" value="Ribosomal_L6"/>
    <property type="match status" value="1"/>
</dbReference>
<dbReference type="PRINTS" id="PR00059">
    <property type="entry name" value="RIBOSOMALL6"/>
</dbReference>
<dbReference type="SUPFAM" id="SSF56053">
    <property type="entry name" value="Ribosomal protein L6"/>
    <property type="match status" value="2"/>
</dbReference>
<dbReference type="PROSITE" id="PS00525">
    <property type="entry name" value="RIBOSOMAL_L6_1"/>
    <property type="match status" value="1"/>
</dbReference>
<reference key="1">
    <citation type="journal article" date="2008" name="PLoS ONE">
        <title>Genome sequence of a lancefield group C Streptococcus zooepidemicus strain causing epidemic nephritis: new information about an old disease.</title>
        <authorList>
            <person name="Beres S.B."/>
            <person name="Sesso R."/>
            <person name="Pinto S.W.L."/>
            <person name="Hoe N.P."/>
            <person name="Porcella S.F."/>
            <person name="Deleo F.R."/>
            <person name="Musser J.M."/>
        </authorList>
    </citation>
    <scope>NUCLEOTIDE SEQUENCE [LARGE SCALE GENOMIC DNA]</scope>
    <source>
        <strain>MGCS10565</strain>
    </source>
</reference>
<keyword id="KW-0687">Ribonucleoprotein</keyword>
<keyword id="KW-0689">Ribosomal protein</keyword>
<keyword id="KW-0694">RNA-binding</keyword>
<keyword id="KW-0699">rRNA-binding</keyword>
<organism>
    <name type="scientific">Streptococcus equi subsp. zooepidemicus (strain MGCS10565)</name>
    <dbReference type="NCBI Taxonomy" id="552526"/>
    <lineage>
        <taxon>Bacteria</taxon>
        <taxon>Bacillati</taxon>
        <taxon>Bacillota</taxon>
        <taxon>Bacilli</taxon>
        <taxon>Lactobacillales</taxon>
        <taxon>Streptococcaceae</taxon>
        <taxon>Streptococcus</taxon>
    </lineage>
</organism>
<gene>
    <name evidence="1" type="primary">rplF</name>
    <name type="ordered locus">Sez_0071</name>
</gene>
<evidence type="ECO:0000255" key="1">
    <source>
        <dbReference type="HAMAP-Rule" id="MF_01365"/>
    </source>
</evidence>
<evidence type="ECO:0000305" key="2"/>
<accession>B4U515</accession>
<feature type="chain" id="PRO_1000144051" description="Large ribosomal subunit protein uL6">
    <location>
        <begin position="1"/>
        <end position="178"/>
    </location>
</feature>
<comment type="function">
    <text evidence="1">This protein binds to the 23S rRNA, and is important in its secondary structure. It is located near the subunit interface in the base of the L7/L12 stalk, and near the tRNA binding site of the peptidyltransferase center.</text>
</comment>
<comment type="subunit">
    <text evidence="1">Part of the 50S ribosomal subunit.</text>
</comment>
<comment type="similarity">
    <text evidence="1">Belongs to the universal ribosomal protein uL6 family.</text>
</comment>
<proteinExistence type="inferred from homology"/>
<name>RL6_STREM</name>
<sequence length="178" mass="19471">MSRIGNKVIIIPAGVEIINNDNVVTVKGPKGELTREFNKNIEIKVEGNEMTLVRPDDSKEMKTIHGTTRANLNNMVVGVSEGFKKELEMKGVGYRAQLQGSKLVLSVGKSHQDEVEAPEGITFTVANPTSISVEGINKEVVGQTAAYIRSLRSPEPYKGKGIRYVGEYVRLKEGKTGK</sequence>